<protein>
    <recommendedName>
        <fullName evidence="3">Kalirin</fullName>
        <ecNumber>2.7.11.1</ecNumber>
    </recommendedName>
    <alternativeName>
        <fullName>Huntingtin-associated protein-interacting protein</fullName>
    </alternativeName>
    <alternativeName>
        <fullName>Protein Duo</fullName>
    </alternativeName>
    <alternativeName>
        <fullName>Serine/threonine-protein kinase with Dbl- and pleckstrin homology domain</fullName>
    </alternativeName>
</protein>
<proteinExistence type="evidence at protein level"/>
<keyword id="KW-0002">3D-structure</keyword>
<keyword id="KW-0025">Alternative splicing</keyword>
<keyword id="KW-0067">ATP-binding</keyword>
<keyword id="KW-0963">Cytoplasm</keyword>
<keyword id="KW-0206">Cytoskeleton</keyword>
<keyword id="KW-1015">Disulfide bond</keyword>
<keyword id="KW-0344">Guanine-nucleotide releasing factor</keyword>
<keyword id="KW-0393">Immunoglobulin domain</keyword>
<keyword id="KW-0418">Kinase</keyword>
<keyword id="KW-0460">Magnesium</keyword>
<keyword id="KW-0479">Metal-binding</keyword>
<keyword id="KW-0547">Nucleotide-binding</keyword>
<keyword id="KW-0597">Phosphoprotein</keyword>
<keyword id="KW-1267">Proteomics identification</keyword>
<keyword id="KW-1185">Reference proteome</keyword>
<keyword id="KW-0677">Repeat</keyword>
<keyword id="KW-0723">Serine/threonine-protein kinase</keyword>
<keyword id="KW-0728">SH3 domain</keyword>
<keyword id="KW-0808">Transferase</keyword>
<comment type="function">
    <text evidence="14">Promotes the exchange of GDP by GTP. Activates specific Rho GTPase family members, thereby inducing various signaling mechanisms that regulate neuronal shape, growth, and plasticity, through their effects on the actin cytoskeleton. Induces lamellipodia independent of its GEF activity.</text>
</comment>
<comment type="catalytic activity">
    <reaction>
        <text>L-seryl-[protein] + ATP = O-phospho-L-seryl-[protein] + ADP + H(+)</text>
        <dbReference type="Rhea" id="RHEA:17989"/>
        <dbReference type="Rhea" id="RHEA-COMP:9863"/>
        <dbReference type="Rhea" id="RHEA-COMP:11604"/>
        <dbReference type="ChEBI" id="CHEBI:15378"/>
        <dbReference type="ChEBI" id="CHEBI:29999"/>
        <dbReference type="ChEBI" id="CHEBI:30616"/>
        <dbReference type="ChEBI" id="CHEBI:83421"/>
        <dbReference type="ChEBI" id="CHEBI:456216"/>
        <dbReference type="EC" id="2.7.11.1"/>
    </reaction>
</comment>
<comment type="catalytic activity">
    <reaction>
        <text>L-threonyl-[protein] + ATP = O-phospho-L-threonyl-[protein] + ADP + H(+)</text>
        <dbReference type="Rhea" id="RHEA:46608"/>
        <dbReference type="Rhea" id="RHEA-COMP:11060"/>
        <dbReference type="Rhea" id="RHEA-COMP:11605"/>
        <dbReference type="ChEBI" id="CHEBI:15378"/>
        <dbReference type="ChEBI" id="CHEBI:30013"/>
        <dbReference type="ChEBI" id="CHEBI:30616"/>
        <dbReference type="ChEBI" id="CHEBI:61977"/>
        <dbReference type="ChEBI" id="CHEBI:456216"/>
        <dbReference type="EC" id="2.7.11.1"/>
    </reaction>
</comment>
<comment type="cofactor">
    <cofactor>
        <name>Mg(2+)</name>
        <dbReference type="ChEBI" id="CHEBI:18420"/>
    </cofactor>
</comment>
<comment type="subunit">
    <text evidence="1 17">Interacts with the C-terminal of peptidylglycine alpha-amidating monooxygenase (PAM) and with the huntingtin-associated protein 1 (HAP1) (By similarity). Interacts with FASLG.</text>
</comment>
<comment type="interaction">
    <interactant intactId="EBI-949233">
        <id>O60229</id>
    </interactant>
    <interactant intactId="EBI-25475920">
        <id>PRO_0000449631</id>
        <label>rep</label>
        <dbReference type="UniProtKB" id="P0DTD1"/>
    </interactant>
    <organismsDiffer>true</organismsDiffer>
    <experiments>3</experiments>
</comment>
<comment type="interaction">
    <interactant intactId="EBI-949233">
        <id>O60229</id>
    </interactant>
    <interactant intactId="EBI-25492395">
        <id>PRO_0000449633</id>
        <label>rep</label>
        <dbReference type="UniProtKB" id="P0DTD1"/>
    </interactant>
    <organismsDiffer>true</organismsDiffer>
    <experiments>3</experiments>
</comment>
<comment type="interaction">
    <interactant intactId="EBI-9075360">
        <id>O60229-2</id>
    </interactant>
    <interactant intactId="EBI-9075374">
        <id>Q9Y6H5-1</id>
        <label>SNCAIP</label>
    </interactant>
    <organismsDiffer>false</organismsDiffer>
    <experiments>3</experiments>
</comment>
<comment type="subcellular location">
    <subcellularLocation>
        <location evidence="14">Cytoplasm</location>
    </subcellularLocation>
    <subcellularLocation>
        <location evidence="14">Cytoplasm</location>
        <location evidence="14">Cytoskeleton</location>
    </subcellularLocation>
    <text>Associated with the cytoskeleton.</text>
</comment>
<comment type="alternative products">
    <event type="alternative splicing"/>
    <isoform>
        <id>O60229-1</id>
        <name>1</name>
        <sequence type="displayed"/>
    </isoform>
    <isoform>
        <id>O60229-2</id>
        <name>2</name>
        <sequence type="described" ref="VSP_028910 VSP_028911"/>
    </isoform>
    <isoform>
        <id>O60229-4</id>
        <name>4</name>
        <name>DUET</name>
        <name>TRAD</name>
        <sequence type="described" ref="VSP_028903 VSP_028912"/>
    </isoform>
    <isoform>
        <id>O60229-5</id>
        <name>5</name>
        <sequence type="described" ref="VSP_028904 VSP_028909 VSP_028913 VSP_028914 VSP_028915"/>
    </isoform>
    <isoform>
        <id>O60229-6</id>
        <name>6</name>
        <sequence type="described" ref="VSP_028903 VSP_028912 VSP_028913"/>
    </isoform>
    <isoform>
        <id>O60229-7</id>
        <name>7</name>
        <sequence type="described" ref="VSP_062495 VSP_062496 VSP_028914"/>
    </isoform>
</comment>
<comment type="tissue specificity">
    <text evidence="14">Isoform 2 is brain specific. Highly expressed in cerebral cortex, putamen, amygdala, hippocampus and caudate nucleus. Weakly expressed in brain stem and cerebellum. Isoform 4 is expressed in skeletal muscle.</text>
</comment>
<comment type="domain">
    <text evidence="1">The two GEF domains catalyze nucleotide exchange for RAC1 and RhoA which are bound by DH1 and DH2 respectively. The two GEF domains appear to play differing roles in neuronal development and axonal outgrowth. SH3 1 binds to the first GEF domain inhibiting GEF activity only when in the presence of a PXXP peptide, suggesting that the SH3 domain/peptide interaction mediates binding to GEF1. CRK1 SH3 domain binds to and inhibits GEF1 activity (By similarity).</text>
</comment>
<comment type="PTM">
    <text>Autophosphorylated.</text>
</comment>
<comment type="miscellaneous">
    <text>Called DUO because the encoded protein is closely related to but shorter than TRIO.</text>
</comment>
<comment type="similarity">
    <text evidence="23">Belongs to the protein kinase superfamily. CAMK Ser/Thr protein kinase family.</text>
</comment>
<comment type="sequence caution" evidence="23">
    <conflict type="miscellaneous discrepancy">
        <sequence resource="EMBL-CDS" id="AAH58015"/>
    </conflict>
    <text>Contaminating sequence. Potential poly-A sequence.</text>
</comment>
<comment type="sequence caution" evidence="23">
    <conflict type="miscellaneous discrepancy">
        <sequence resource="EMBL-CDS" id="BAD18530"/>
    </conflict>
    <text>Probable cloning artifact.</text>
</comment>
<evidence type="ECO:0000250" key="1"/>
<evidence type="ECO:0000250" key="2">
    <source>
        <dbReference type="UniProtKB" id="A2CG49"/>
    </source>
</evidence>
<evidence type="ECO:0000250" key="3">
    <source>
        <dbReference type="UniProtKB" id="P97924"/>
    </source>
</evidence>
<evidence type="ECO:0000255" key="4"/>
<evidence type="ECO:0000255" key="5">
    <source>
        <dbReference type="PROSITE-ProRule" id="PRU00056"/>
    </source>
</evidence>
<evidence type="ECO:0000255" key="6">
    <source>
        <dbReference type="PROSITE-ProRule" id="PRU00062"/>
    </source>
</evidence>
<evidence type="ECO:0000255" key="7">
    <source>
        <dbReference type="PROSITE-ProRule" id="PRU00114"/>
    </source>
</evidence>
<evidence type="ECO:0000255" key="8">
    <source>
        <dbReference type="PROSITE-ProRule" id="PRU00145"/>
    </source>
</evidence>
<evidence type="ECO:0000255" key="9">
    <source>
        <dbReference type="PROSITE-ProRule" id="PRU00159"/>
    </source>
</evidence>
<evidence type="ECO:0000255" key="10">
    <source>
        <dbReference type="PROSITE-ProRule" id="PRU00192"/>
    </source>
</evidence>
<evidence type="ECO:0000255" key="11">
    <source>
        <dbReference type="PROSITE-ProRule" id="PRU00316"/>
    </source>
</evidence>
<evidence type="ECO:0000255" key="12">
    <source>
        <dbReference type="PROSITE-ProRule" id="PRU10027"/>
    </source>
</evidence>
<evidence type="ECO:0000256" key="13">
    <source>
        <dbReference type="SAM" id="MobiDB-lite"/>
    </source>
</evidence>
<evidence type="ECO:0000269" key="14">
    <source>
    </source>
</evidence>
<evidence type="ECO:0000269" key="15">
    <source>
    </source>
</evidence>
<evidence type="ECO:0000269" key="16">
    <source>
    </source>
</evidence>
<evidence type="ECO:0000269" key="17">
    <source>
    </source>
</evidence>
<evidence type="ECO:0000303" key="18">
    <source>
    </source>
</evidence>
<evidence type="ECO:0000303" key="19">
    <source>
    </source>
</evidence>
<evidence type="ECO:0000303" key="20">
    <source>
    </source>
</evidence>
<evidence type="ECO:0000303" key="21">
    <source>
    </source>
</evidence>
<evidence type="ECO:0000303" key="22">
    <source>
    </source>
</evidence>
<evidence type="ECO:0000305" key="23"/>
<evidence type="ECO:0000312" key="24">
    <source>
        <dbReference type="HGNC" id="HGNC:4814"/>
    </source>
</evidence>
<evidence type="ECO:0007744" key="25">
    <source>
    </source>
</evidence>
<evidence type="ECO:0007744" key="26">
    <source>
    </source>
</evidence>
<evidence type="ECO:0007829" key="27">
    <source>
        <dbReference type="PDB" id="5QQJ"/>
    </source>
</evidence>
<evidence type="ECO:0007829" key="28">
    <source>
        <dbReference type="PDB" id="8C7D"/>
    </source>
</evidence>
<dbReference type="EC" id="2.7.11.1"/>
<dbReference type="EMBL" id="U94190">
    <property type="protein sequence ID" value="AAC15791.1"/>
    <property type="molecule type" value="mRNA"/>
</dbReference>
<dbReference type="EMBL" id="AB011422">
    <property type="protein sequence ID" value="BAA76314.1"/>
    <property type="molecule type" value="mRNA"/>
</dbReference>
<dbReference type="EMBL" id="AK125979">
    <property type="protein sequence ID" value="BAC86373.1"/>
    <property type="molecule type" value="mRNA"/>
</dbReference>
<dbReference type="EMBL" id="AK131379">
    <property type="protein sequence ID" value="BAD18530.1"/>
    <property type="status" value="ALT_SEQ"/>
    <property type="molecule type" value="mRNA"/>
</dbReference>
<dbReference type="EMBL" id="AC022336">
    <property type="status" value="NOT_ANNOTATED_CDS"/>
    <property type="molecule type" value="Genomic_DNA"/>
</dbReference>
<dbReference type="EMBL" id="AC069233">
    <property type="status" value="NOT_ANNOTATED_CDS"/>
    <property type="molecule type" value="Genomic_DNA"/>
</dbReference>
<dbReference type="EMBL" id="AC080008">
    <property type="status" value="NOT_ANNOTATED_CDS"/>
    <property type="molecule type" value="Genomic_DNA"/>
</dbReference>
<dbReference type="EMBL" id="AC112129">
    <property type="status" value="NOT_ANNOTATED_CDS"/>
    <property type="molecule type" value="Genomic_DNA"/>
</dbReference>
<dbReference type="EMBL" id="AC117381">
    <property type="status" value="NOT_ANNOTATED_CDS"/>
    <property type="molecule type" value="Genomic_DNA"/>
</dbReference>
<dbReference type="EMBL" id="AC117401">
    <property type="status" value="NOT_ANNOTATED_CDS"/>
    <property type="molecule type" value="Genomic_DNA"/>
</dbReference>
<dbReference type="EMBL" id="KF457679">
    <property type="status" value="NOT_ANNOTATED_CDS"/>
    <property type="molecule type" value="Genomic_DNA"/>
</dbReference>
<dbReference type="EMBL" id="CH471052">
    <property type="protein sequence ID" value="EAW79410.1"/>
    <property type="molecule type" value="Genomic_DNA"/>
</dbReference>
<dbReference type="EMBL" id="BC026865">
    <property type="protein sequence ID" value="AAH26865.1"/>
    <property type="molecule type" value="mRNA"/>
</dbReference>
<dbReference type="EMBL" id="BC058015">
    <property type="protein sequence ID" value="AAH58015.1"/>
    <property type="status" value="ALT_SEQ"/>
    <property type="molecule type" value="mRNA"/>
</dbReference>
<dbReference type="EMBL" id="AL137629">
    <property type="protein sequence ID" value="CAB70850.1"/>
    <property type="molecule type" value="mRNA"/>
</dbReference>
<dbReference type="CCDS" id="CCDS3027.1">
    <molecule id="O60229-2"/>
</dbReference>
<dbReference type="CCDS" id="CCDS3028.1">
    <molecule id="O60229-4"/>
</dbReference>
<dbReference type="CCDS" id="CCDS93359.1">
    <molecule id="O60229-7"/>
</dbReference>
<dbReference type="PIR" id="T46482">
    <property type="entry name" value="T46482"/>
</dbReference>
<dbReference type="RefSeq" id="NP_001019831.2">
    <molecule id="O60229-1"/>
    <property type="nucleotide sequence ID" value="NM_001024660.5"/>
</dbReference>
<dbReference type="RefSeq" id="NP_001309917.1">
    <property type="nucleotide sequence ID" value="NM_001322988.1"/>
</dbReference>
<dbReference type="RefSeq" id="NP_001309918.1">
    <property type="nucleotide sequence ID" value="NM_001322989.1"/>
</dbReference>
<dbReference type="RefSeq" id="NP_001309923.1">
    <property type="nucleotide sequence ID" value="NM_001322994.1"/>
</dbReference>
<dbReference type="RefSeq" id="NP_001309924.1">
    <property type="nucleotide sequence ID" value="NM_001322995.1"/>
</dbReference>
<dbReference type="RefSeq" id="NP_001309925.1">
    <property type="nucleotide sequence ID" value="NM_001322996.1"/>
</dbReference>
<dbReference type="RefSeq" id="NP_001309926.1">
    <property type="nucleotide sequence ID" value="NM_001322997.1"/>
</dbReference>
<dbReference type="RefSeq" id="NP_001309927.1">
    <property type="nucleotide sequence ID" value="NM_001322998.1"/>
</dbReference>
<dbReference type="RefSeq" id="NP_001309928.1">
    <property type="nucleotide sequence ID" value="NM_001322999.1"/>
</dbReference>
<dbReference type="RefSeq" id="NP_001309929.1">
    <property type="nucleotide sequence ID" value="NM_001323000.1"/>
</dbReference>
<dbReference type="RefSeq" id="NP_001309930.1">
    <property type="nucleotide sequence ID" value="NM_001323001.1"/>
</dbReference>
<dbReference type="RefSeq" id="NP_001375348.1">
    <molecule id="O60229-7"/>
    <property type="nucleotide sequence ID" value="NM_001388419.1"/>
</dbReference>
<dbReference type="RefSeq" id="NP_003938.1">
    <molecule id="O60229-2"/>
    <property type="nucleotide sequence ID" value="NM_003947.6"/>
</dbReference>
<dbReference type="RefSeq" id="NP_008995.2">
    <molecule id="O60229-4"/>
    <property type="nucleotide sequence ID" value="NM_007064.5"/>
</dbReference>
<dbReference type="PDB" id="5QQD">
    <property type="method" value="X-ray"/>
    <property type="resolution" value="1.91 A"/>
    <property type="chains" value="B=1280-1459"/>
</dbReference>
<dbReference type="PDB" id="5QQE">
    <property type="method" value="X-ray"/>
    <property type="resolution" value="1.95 A"/>
    <property type="chains" value="B=1280-1459"/>
</dbReference>
<dbReference type="PDB" id="5QQF">
    <property type="method" value="X-ray"/>
    <property type="resolution" value="2.26 A"/>
    <property type="chains" value="B=1280-1459"/>
</dbReference>
<dbReference type="PDB" id="5QQG">
    <property type="method" value="X-ray"/>
    <property type="resolution" value="2.23 A"/>
    <property type="chains" value="B=1280-1459"/>
</dbReference>
<dbReference type="PDB" id="5QQH">
    <property type="method" value="X-ray"/>
    <property type="resolution" value="2.09 A"/>
    <property type="chains" value="B=1280-1459"/>
</dbReference>
<dbReference type="PDB" id="5QQI">
    <property type="method" value="X-ray"/>
    <property type="resolution" value="2.08 A"/>
    <property type="chains" value="B=1280-1459"/>
</dbReference>
<dbReference type="PDB" id="5QQJ">
    <property type="method" value="X-ray"/>
    <property type="resolution" value="1.90 A"/>
    <property type="chains" value="B=1280-1459"/>
</dbReference>
<dbReference type="PDB" id="5QQK">
    <property type="method" value="X-ray"/>
    <property type="resolution" value="2.24 A"/>
    <property type="chains" value="B=1280-1459"/>
</dbReference>
<dbReference type="PDB" id="5QQL">
    <property type="method" value="X-ray"/>
    <property type="resolution" value="2.25 A"/>
    <property type="chains" value="B=1280-1459"/>
</dbReference>
<dbReference type="PDB" id="5QQM">
    <property type="method" value="X-ray"/>
    <property type="resolution" value="2.02 A"/>
    <property type="chains" value="B=1280-1459"/>
</dbReference>
<dbReference type="PDB" id="5QQN">
    <property type="method" value="X-ray"/>
    <property type="resolution" value="2.26 A"/>
    <property type="chains" value="B=1280-1459"/>
</dbReference>
<dbReference type="PDB" id="5QU9">
    <property type="method" value="X-ray"/>
    <property type="resolution" value="2.00 A"/>
    <property type="chains" value="B=1280-1459"/>
</dbReference>
<dbReference type="PDB" id="8C7D">
    <property type="method" value="X-ray"/>
    <property type="resolution" value="1.86 A"/>
    <property type="chains" value="A=1916-2114"/>
</dbReference>
<dbReference type="PDBsum" id="5QQD"/>
<dbReference type="PDBsum" id="5QQE"/>
<dbReference type="PDBsum" id="5QQF"/>
<dbReference type="PDBsum" id="5QQG"/>
<dbReference type="PDBsum" id="5QQH"/>
<dbReference type="PDBsum" id="5QQI"/>
<dbReference type="PDBsum" id="5QQJ"/>
<dbReference type="PDBsum" id="5QQK"/>
<dbReference type="PDBsum" id="5QQL"/>
<dbReference type="PDBsum" id="5QQM"/>
<dbReference type="PDBsum" id="5QQN"/>
<dbReference type="PDBsum" id="5QU9"/>
<dbReference type="PDBsum" id="8C7D"/>
<dbReference type="SMR" id="O60229"/>
<dbReference type="BioGRID" id="114478">
    <property type="interactions" value="39"/>
</dbReference>
<dbReference type="CORUM" id="O60229"/>
<dbReference type="FunCoup" id="O60229">
    <property type="interactions" value="1086"/>
</dbReference>
<dbReference type="IntAct" id="O60229">
    <property type="interactions" value="31"/>
</dbReference>
<dbReference type="MINT" id="O60229"/>
<dbReference type="STRING" id="9606.ENSP00000240874"/>
<dbReference type="GlyGen" id="O60229">
    <property type="glycosylation" value="2 sites, 1 O-linked glycan (1 site)"/>
</dbReference>
<dbReference type="iPTMnet" id="O60229"/>
<dbReference type="PhosphoSitePlus" id="O60229"/>
<dbReference type="SwissPalm" id="O60229"/>
<dbReference type="BioMuta" id="KALRN"/>
<dbReference type="jPOST" id="O60229"/>
<dbReference type="MassIVE" id="O60229"/>
<dbReference type="PaxDb" id="9606-ENSP00000240874"/>
<dbReference type="PeptideAtlas" id="O60229"/>
<dbReference type="ProteomicsDB" id="11196"/>
<dbReference type="ProteomicsDB" id="49252">
    <molecule id="O60229-1"/>
</dbReference>
<dbReference type="ProteomicsDB" id="49253">
    <molecule id="O60229-2"/>
</dbReference>
<dbReference type="ProteomicsDB" id="49255">
    <molecule id="O60229-4"/>
</dbReference>
<dbReference type="ProteomicsDB" id="49256">
    <molecule id="O60229-5"/>
</dbReference>
<dbReference type="ProteomicsDB" id="49257">
    <molecule id="O60229-6"/>
</dbReference>
<dbReference type="Pumba" id="O60229"/>
<dbReference type="Antibodypedia" id="2142">
    <property type="antibodies" value="171 antibodies from 33 providers"/>
</dbReference>
<dbReference type="DNASU" id="8997"/>
<dbReference type="Ensembl" id="ENST00000240874.7">
    <molecule id="O60229-2"/>
    <property type="protein sequence ID" value="ENSP00000240874.3"/>
    <property type="gene ID" value="ENSG00000160145.16"/>
</dbReference>
<dbReference type="Ensembl" id="ENST00000291478.9">
    <molecule id="O60229-4"/>
    <property type="protein sequence ID" value="ENSP00000291478.4"/>
    <property type="gene ID" value="ENSG00000160145.16"/>
</dbReference>
<dbReference type="Ensembl" id="ENST00000360013.7">
    <molecule id="O60229-1"/>
    <property type="protein sequence ID" value="ENSP00000353109.3"/>
    <property type="gene ID" value="ENSG00000160145.16"/>
</dbReference>
<dbReference type="Ensembl" id="ENST00000682506.1">
    <molecule id="O60229-7"/>
    <property type="protein sequence ID" value="ENSP00000508359.1"/>
    <property type="gene ID" value="ENSG00000160145.16"/>
</dbReference>
<dbReference type="GeneID" id="8997"/>
<dbReference type="KEGG" id="hsa:8997"/>
<dbReference type="MANE-Select" id="ENST00000682506.1">
    <molecule id="O60229-7"/>
    <property type="protein sequence ID" value="ENSP00000508359.1"/>
    <property type="RefSeq nucleotide sequence ID" value="NM_001388419.1"/>
    <property type="RefSeq protein sequence ID" value="NP_001375348.1"/>
</dbReference>
<dbReference type="UCSC" id="uc003ehf.2">
    <molecule id="O60229-1"/>
    <property type="organism name" value="human"/>
</dbReference>
<dbReference type="AGR" id="HGNC:4814"/>
<dbReference type="CTD" id="8997"/>
<dbReference type="DisGeNET" id="8997"/>
<dbReference type="GeneCards" id="KALRN"/>
<dbReference type="HGNC" id="HGNC:4814">
    <property type="gene designation" value="KALRN"/>
</dbReference>
<dbReference type="HPA" id="ENSG00000160145">
    <property type="expression patterns" value="Tissue enhanced (brain)"/>
</dbReference>
<dbReference type="MalaCards" id="KALRN"/>
<dbReference type="MIM" id="604605">
    <property type="type" value="gene"/>
</dbReference>
<dbReference type="neXtProt" id="NX_O60229"/>
<dbReference type="OpenTargets" id="ENSG00000160145"/>
<dbReference type="PharmGKB" id="PA29189"/>
<dbReference type="VEuPathDB" id="HostDB:ENSG00000160145"/>
<dbReference type="eggNOG" id="KOG4240">
    <property type="taxonomic scope" value="Eukaryota"/>
</dbReference>
<dbReference type="GeneTree" id="ENSGT00940000155248"/>
<dbReference type="HOGENOM" id="CLU_000373_0_1_1"/>
<dbReference type="InParanoid" id="O60229"/>
<dbReference type="OMA" id="AKXFIMA"/>
<dbReference type="OrthoDB" id="10256089at2759"/>
<dbReference type="PAN-GO" id="O60229">
    <property type="GO annotations" value="6 GO annotations based on evolutionary models"/>
</dbReference>
<dbReference type="PhylomeDB" id="O60229"/>
<dbReference type="TreeFam" id="TF318080"/>
<dbReference type="PathwayCommons" id="O60229"/>
<dbReference type="Reactome" id="R-HSA-193648">
    <property type="pathway name" value="NRAGE signals death through JNK"/>
</dbReference>
<dbReference type="Reactome" id="R-HSA-3928662">
    <property type="pathway name" value="EPHB-mediated forward signaling"/>
</dbReference>
<dbReference type="Reactome" id="R-HSA-416476">
    <property type="pathway name" value="G alpha (q) signalling events"/>
</dbReference>
<dbReference type="Reactome" id="R-HSA-416482">
    <property type="pathway name" value="G alpha (12/13) signalling events"/>
</dbReference>
<dbReference type="Reactome" id="R-HSA-5687128">
    <property type="pathway name" value="MAPK6/MAPK4 signaling"/>
</dbReference>
<dbReference type="Reactome" id="R-HSA-8980692">
    <property type="pathway name" value="RHOA GTPase cycle"/>
</dbReference>
<dbReference type="Reactome" id="R-HSA-9013149">
    <property type="pathway name" value="RAC1 GTPase cycle"/>
</dbReference>
<dbReference type="Reactome" id="R-HSA-9013408">
    <property type="pathway name" value="RHOG GTPase cycle"/>
</dbReference>
<dbReference type="SignaLink" id="O60229"/>
<dbReference type="SIGNOR" id="O60229"/>
<dbReference type="BioGRID-ORCS" id="8997">
    <property type="hits" value="10 hits in 1180 CRISPR screens"/>
</dbReference>
<dbReference type="CD-CODE" id="FB4E32DD">
    <property type="entry name" value="Presynaptic clusters and postsynaptic densities"/>
</dbReference>
<dbReference type="ChiTaRS" id="KALRN">
    <property type="organism name" value="human"/>
</dbReference>
<dbReference type="GeneWiki" id="Kalirin"/>
<dbReference type="GenomeRNAi" id="8997"/>
<dbReference type="Pharos" id="O60229">
    <property type="development level" value="Tbio"/>
</dbReference>
<dbReference type="PRO" id="PR:O60229"/>
<dbReference type="Proteomes" id="UP000005640">
    <property type="component" value="Chromosome 3"/>
</dbReference>
<dbReference type="RNAct" id="O60229">
    <property type="molecule type" value="protein"/>
</dbReference>
<dbReference type="Bgee" id="ENSG00000160145">
    <property type="expression patterns" value="Expressed in secondary oocyte and 167 other cell types or tissues"/>
</dbReference>
<dbReference type="ExpressionAtlas" id="O60229">
    <property type="expression patterns" value="baseline and differential"/>
</dbReference>
<dbReference type="GO" id="GO:0015629">
    <property type="term" value="C:actin cytoskeleton"/>
    <property type="evidence" value="ECO:0000304"/>
    <property type="project" value="ProtInc"/>
</dbReference>
<dbReference type="GO" id="GO:0005737">
    <property type="term" value="C:cytoplasm"/>
    <property type="evidence" value="ECO:0000318"/>
    <property type="project" value="GO_Central"/>
</dbReference>
<dbReference type="GO" id="GO:0005829">
    <property type="term" value="C:cytosol"/>
    <property type="evidence" value="ECO:0000314"/>
    <property type="project" value="HPA"/>
</dbReference>
<dbReference type="GO" id="GO:0070062">
    <property type="term" value="C:extracellular exosome"/>
    <property type="evidence" value="ECO:0007005"/>
    <property type="project" value="UniProtKB"/>
</dbReference>
<dbReference type="GO" id="GO:0019898">
    <property type="term" value="C:extrinsic component of membrane"/>
    <property type="evidence" value="ECO:0000318"/>
    <property type="project" value="GO_Central"/>
</dbReference>
<dbReference type="GO" id="GO:0005654">
    <property type="term" value="C:nucleoplasm"/>
    <property type="evidence" value="ECO:0000314"/>
    <property type="project" value="HPA"/>
</dbReference>
<dbReference type="GO" id="GO:0014069">
    <property type="term" value="C:postsynaptic density"/>
    <property type="evidence" value="ECO:0000318"/>
    <property type="project" value="GO_Central"/>
</dbReference>
<dbReference type="GO" id="GO:0005524">
    <property type="term" value="F:ATP binding"/>
    <property type="evidence" value="ECO:0007669"/>
    <property type="project" value="UniProtKB-KW"/>
</dbReference>
<dbReference type="GO" id="GO:0005085">
    <property type="term" value="F:guanyl-nucleotide exchange factor activity"/>
    <property type="evidence" value="ECO:0000269"/>
    <property type="project" value="Reactome"/>
</dbReference>
<dbReference type="GO" id="GO:0046872">
    <property type="term" value="F:metal ion binding"/>
    <property type="evidence" value="ECO:0007669"/>
    <property type="project" value="UniProtKB-KW"/>
</dbReference>
<dbReference type="GO" id="GO:0106310">
    <property type="term" value="F:protein serine kinase activity"/>
    <property type="evidence" value="ECO:0007669"/>
    <property type="project" value="RHEA"/>
</dbReference>
<dbReference type="GO" id="GO:0004674">
    <property type="term" value="F:protein serine/threonine kinase activity"/>
    <property type="evidence" value="ECO:0000304"/>
    <property type="project" value="ProtInc"/>
</dbReference>
<dbReference type="GO" id="GO:0007411">
    <property type="term" value="P:axon guidance"/>
    <property type="evidence" value="ECO:0000318"/>
    <property type="project" value="GO_Central"/>
</dbReference>
<dbReference type="GO" id="GO:0048013">
    <property type="term" value="P:ephrin receptor signaling pathway"/>
    <property type="evidence" value="ECO:0000304"/>
    <property type="project" value="Reactome"/>
</dbReference>
<dbReference type="GO" id="GO:0035556">
    <property type="term" value="P:intracellular signal transduction"/>
    <property type="evidence" value="ECO:0000250"/>
    <property type="project" value="HGNC-UCL"/>
</dbReference>
<dbReference type="GO" id="GO:0007399">
    <property type="term" value="P:nervous system development"/>
    <property type="evidence" value="ECO:0000250"/>
    <property type="project" value="HGNC-UCL"/>
</dbReference>
<dbReference type="GO" id="GO:0006468">
    <property type="term" value="P:protein phosphorylation"/>
    <property type="evidence" value="ECO:0000304"/>
    <property type="project" value="ProtInc"/>
</dbReference>
<dbReference type="GO" id="GO:0051056">
    <property type="term" value="P:regulation of small GTPase mediated signal transduction"/>
    <property type="evidence" value="ECO:0000304"/>
    <property type="project" value="Reactome"/>
</dbReference>
<dbReference type="GO" id="GO:0007165">
    <property type="term" value="P:signal transduction"/>
    <property type="evidence" value="ECO:0000304"/>
    <property type="project" value="ProtInc"/>
</dbReference>
<dbReference type="GO" id="GO:0016192">
    <property type="term" value="P:vesicle-mediated transport"/>
    <property type="evidence" value="ECO:0000304"/>
    <property type="project" value="ProtInc"/>
</dbReference>
<dbReference type="CDD" id="cd00063">
    <property type="entry name" value="FN3"/>
    <property type="match status" value="1"/>
</dbReference>
<dbReference type="CDD" id="cd13240">
    <property type="entry name" value="PH1_Kalirin_Trio_like"/>
    <property type="match status" value="1"/>
</dbReference>
<dbReference type="CDD" id="cd13241">
    <property type="entry name" value="PH2_Kalirin_Trio_p63RhoGEF"/>
    <property type="match status" value="1"/>
</dbReference>
<dbReference type="CDD" id="cd00160">
    <property type="entry name" value="RhoGEF"/>
    <property type="match status" value="2"/>
</dbReference>
<dbReference type="CDD" id="cd00170">
    <property type="entry name" value="SEC14"/>
    <property type="match status" value="1"/>
</dbReference>
<dbReference type="CDD" id="cd11852">
    <property type="entry name" value="SH3_Kalirin_1"/>
    <property type="match status" value="1"/>
</dbReference>
<dbReference type="CDD" id="cd11853">
    <property type="entry name" value="SH3_Kalirin_2"/>
    <property type="match status" value="1"/>
</dbReference>
<dbReference type="CDD" id="cd00176">
    <property type="entry name" value="SPEC"/>
    <property type="match status" value="4"/>
</dbReference>
<dbReference type="CDD" id="cd14115">
    <property type="entry name" value="STKc_Kalirin_C"/>
    <property type="match status" value="1"/>
</dbReference>
<dbReference type="FunFam" id="1.20.900.10:FF:000001">
    <property type="entry name" value="Guanine nucleotide exchange factor DBS"/>
    <property type="match status" value="1"/>
</dbReference>
<dbReference type="FunFam" id="1.10.510.10:FF:000152">
    <property type="entry name" value="kalirin isoform X1"/>
    <property type="match status" value="1"/>
</dbReference>
<dbReference type="FunFam" id="2.30.29.30:FF:000091">
    <property type="entry name" value="kalirin isoform X1"/>
    <property type="match status" value="1"/>
</dbReference>
<dbReference type="FunFam" id="2.30.30.40:FF:000038">
    <property type="entry name" value="kalirin isoform X1"/>
    <property type="match status" value="1"/>
</dbReference>
<dbReference type="FunFam" id="2.30.30.40:FF:000040">
    <property type="entry name" value="kalirin isoform X1"/>
    <property type="match status" value="1"/>
</dbReference>
<dbReference type="FunFam" id="2.60.40.10:FF:000325">
    <property type="entry name" value="kalirin isoform X1"/>
    <property type="match status" value="1"/>
</dbReference>
<dbReference type="FunFam" id="2.60.40.10:FF:000368">
    <property type="entry name" value="kalirin isoform X1"/>
    <property type="match status" value="1"/>
</dbReference>
<dbReference type="FunFam" id="3.30.200.20:FF:000169">
    <property type="entry name" value="kalirin isoform X1"/>
    <property type="match status" value="1"/>
</dbReference>
<dbReference type="FunFam" id="1.20.58.60:FF:000034">
    <property type="entry name" value="kalirin isoform X2"/>
    <property type="match status" value="1"/>
</dbReference>
<dbReference type="FunFam" id="3.40.525.10:FF:000003">
    <property type="entry name" value="kalirin isoform X2"/>
    <property type="match status" value="1"/>
</dbReference>
<dbReference type="FunFam" id="1.20.58.60:FF:000024">
    <property type="entry name" value="Kalirin RhoGEF kinase a"/>
    <property type="match status" value="1"/>
</dbReference>
<dbReference type="FunFam" id="1.20.58.60:FF:000023">
    <property type="entry name" value="Kalirin RhoGEF kinase b"/>
    <property type="match status" value="1"/>
</dbReference>
<dbReference type="FunFam" id="1.20.58.60:FF:000032">
    <property type="entry name" value="Kalirin RhoGEF kinase b"/>
    <property type="match status" value="1"/>
</dbReference>
<dbReference type="FunFam" id="2.30.29.30:FF:000040">
    <property type="entry name" value="Kalirin RhoGEF kinase b"/>
    <property type="match status" value="1"/>
</dbReference>
<dbReference type="FunFam" id="1.20.900.10:FF:000008">
    <property type="entry name" value="rho guanine nucleotide exchange factor 25"/>
    <property type="match status" value="1"/>
</dbReference>
<dbReference type="FunFam" id="1.20.58.60:FF:000015">
    <property type="entry name" value="triple functional domain protein-like"/>
    <property type="match status" value="1"/>
</dbReference>
<dbReference type="Gene3D" id="1.20.58.60">
    <property type="match status" value="5"/>
</dbReference>
<dbReference type="Gene3D" id="3.40.525.10">
    <property type="entry name" value="CRAL-TRIO lipid binding domain"/>
    <property type="match status" value="1"/>
</dbReference>
<dbReference type="Gene3D" id="1.20.900.10">
    <property type="entry name" value="Dbl homology (DH) domain"/>
    <property type="match status" value="2"/>
</dbReference>
<dbReference type="Gene3D" id="2.60.40.10">
    <property type="entry name" value="Immunoglobulins"/>
    <property type="match status" value="2"/>
</dbReference>
<dbReference type="Gene3D" id="3.30.200.20">
    <property type="entry name" value="Phosphorylase Kinase, domain 1"/>
    <property type="match status" value="1"/>
</dbReference>
<dbReference type="Gene3D" id="2.30.29.30">
    <property type="entry name" value="Pleckstrin-homology domain (PH domain)/Phosphotyrosine-binding domain (PTB)"/>
    <property type="match status" value="2"/>
</dbReference>
<dbReference type="Gene3D" id="2.30.30.40">
    <property type="entry name" value="SH3 Domains"/>
    <property type="match status" value="2"/>
</dbReference>
<dbReference type="Gene3D" id="1.10.510.10">
    <property type="entry name" value="Transferase(Phosphotransferase) domain 1"/>
    <property type="match status" value="1"/>
</dbReference>
<dbReference type="InterPro" id="IPR001251">
    <property type="entry name" value="CRAL-TRIO_dom"/>
</dbReference>
<dbReference type="InterPro" id="IPR036865">
    <property type="entry name" value="CRAL-TRIO_dom_sf"/>
</dbReference>
<dbReference type="InterPro" id="IPR035899">
    <property type="entry name" value="DBL_dom_sf"/>
</dbReference>
<dbReference type="InterPro" id="IPR000219">
    <property type="entry name" value="DH_dom"/>
</dbReference>
<dbReference type="InterPro" id="IPR003961">
    <property type="entry name" value="FN3_dom"/>
</dbReference>
<dbReference type="InterPro" id="IPR036116">
    <property type="entry name" value="FN3_sf"/>
</dbReference>
<dbReference type="InterPro" id="IPR007110">
    <property type="entry name" value="Ig-like_dom"/>
</dbReference>
<dbReference type="InterPro" id="IPR013783">
    <property type="entry name" value="Ig-like_fold"/>
</dbReference>
<dbReference type="InterPro" id="IPR013098">
    <property type="entry name" value="Ig_I-set"/>
</dbReference>
<dbReference type="InterPro" id="IPR003599">
    <property type="entry name" value="Ig_sub"/>
</dbReference>
<dbReference type="InterPro" id="IPR003598">
    <property type="entry name" value="Ig_sub2"/>
</dbReference>
<dbReference type="InterPro" id="IPR047054">
    <property type="entry name" value="Kalirin_TRIO_PH_1"/>
</dbReference>
<dbReference type="InterPro" id="IPR028570">
    <property type="entry name" value="Kalirin_TRIO_SH3_1"/>
</dbReference>
<dbReference type="InterPro" id="IPR047053">
    <property type="entry name" value="Kalirin_TRIO_SH3_2"/>
</dbReference>
<dbReference type="InterPro" id="IPR011009">
    <property type="entry name" value="Kinase-like_dom_sf"/>
</dbReference>
<dbReference type="InterPro" id="IPR011993">
    <property type="entry name" value="PH-like_dom_sf"/>
</dbReference>
<dbReference type="InterPro" id="IPR001849">
    <property type="entry name" value="PH_domain"/>
</dbReference>
<dbReference type="InterPro" id="IPR000719">
    <property type="entry name" value="Prot_kinase_dom"/>
</dbReference>
<dbReference type="InterPro" id="IPR017441">
    <property type="entry name" value="Protein_kinase_ATP_BS"/>
</dbReference>
<dbReference type="InterPro" id="IPR051336">
    <property type="entry name" value="RhoGEF_Guanine_NuclExch_SF"/>
</dbReference>
<dbReference type="InterPro" id="IPR008271">
    <property type="entry name" value="Ser/Thr_kinase_AS"/>
</dbReference>
<dbReference type="InterPro" id="IPR036028">
    <property type="entry name" value="SH3-like_dom_sf"/>
</dbReference>
<dbReference type="InterPro" id="IPR001452">
    <property type="entry name" value="SH3_domain"/>
</dbReference>
<dbReference type="InterPro" id="IPR055251">
    <property type="entry name" value="SOS1_NGEF_PH"/>
</dbReference>
<dbReference type="InterPro" id="IPR018159">
    <property type="entry name" value="Spectrin/alpha-actinin"/>
</dbReference>
<dbReference type="InterPro" id="IPR002017">
    <property type="entry name" value="Spectrin_repeat"/>
</dbReference>
<dbReference type="PANTHER" id="PTHR22826:SF49">
    <property type="entry name" value="KALIRIN"/>
    <property type="match status" value="1"/>
</dbReference>
<dbReference type="PANTHER" id="PTHR22826">
    <property type="entry name" value="RHO GUANINE EXCHANGE FACTOR-RELATED"/>
    <property type="match status" value="1"/>
</dbReference>
<dbReference type="Pfam" id="PF13716">
    <property type="entry name" value="CRAL_TRIO_2"/>
    <property type="match status" value="1"/>
</dbReference>
<dbReference type="Pfam" id="PF00041">
    <property type="entry name" value="fn3"/>
    <property type="match status" value="1"/>
</dbReference>
<dbReference type="Pfam" id="PF07679">
    <property type="entry name" value="I-set"/>
    <property type="match status" value="1"/>
</dbReference>
<dbReference type="Pfam" id="PF00069">
    <property type="entry name" value="Pkinase"/>
    <property type="match status" value="1"/>
</dbReference>
<dbReference type="Pfam" id="PF00621">
    <property type="entry name" value="RhoGEF"/>
    <property type="match status" value="2"/>
</dbReference>
<dbReference type="Pfam" id="PF16609">
    <property type="entry name" value="SH3-RhoG_link"/>
    <property type="match status" value="1"/>
</dbReference>
<dbReference type="Pfam" id="PF23587">
    <property type="entry name" value="SH3_KALRN"/>
    <property type="match status" value="1"/>
</dbReference>
<dbReference type="Pfam" id="PF22697">
    <property type="entry name" value="SOS1_NGEF_PH"/>
    <property type="match status" value="2"/>
</dbReference>
<dbReference type="Pfam" id="PF00435">
    <property type="entry name" value="Spectrin"/>
    <property type="match status" value="4"/>
</dbReference>
<dbReference type="Pfam" id="PF23323">
    <property type="entry name" value="Spectrin_6"/>
    <property type="match status" value="1"/>
</dbReference>
<dbReference type="SMART" id="SM00060">
    <property type="entry name" value="FN3"/>
    <property type="match status" value="1"/>
</dbReference>
<dbReference type="SMART" id="SM00409">
    <property type="entry name" value="IG"/>
    <property type="match status" value="1"/>
</dbReference>
<dbReference type="SMART" id="SM00408">
    <property type="entry name" value="IGc2"/>
    <property type="match status" value="1"/>
</dbReference>
<dbReference type="SMART" id="SM00233">
    <property type="entry name" value="PH"/>
    <property type="match status" value="2"/>
</dbReference>
<dbReference type="SMART" id="SM00325">
    <property type="entry name" value="RhoGEF"/>
    <property type="match status" value="2"/>
</dbReference>
<dbReference type="SMART" id="SM00220">
    <property type="entry name" value="S_TKc"/>
    <property type="match status" value="1"/>
</dbReference>
<dbReference type="SMART" id="SM00516">
    <property type="entry name" value="SEC14"/>
    <property type="match status" value="1"/>
</dbReference>
<dbReference type="SMART" id="SM00326">
    <property type="entry name" value="SH3"/>
    <property type="match status" value="2"/>
</dbReference>
<dbReference type="SMART" id="SM00150">
    <property type="entry name" value="SPEC"/>
    <property type="match status" value="7"/>
</dbReference>
<dbReference type="SUPFAM" id="SSF52087">
    <property type="entry name" value="CRAL/TRIO domain"/>
    <property type="match status" value="1"/>
</dbReference>
<dbReference type="SUPFAM" id="SSF48065">
    <property type="entry name" value="DBL homology domain (DH-domain)"/>
    <property type="match status" value="2"/>
</dbReference>
<dbReference type="SUPFAM" id="SSF49265">
    <property type="entry name" value="Fibronectin type III"/>
    <property type="match status" value="1"/>
</dbReference>
<dbReference type="SUPFAM" id="SSF50729">
    <property type="entry name" value="PH domain-like"/>
    <property type="match status" value="2"/>
</dbReference>
<dbReference type="SUPFAM" id="SSF56112">
    <property type="entry name" value="Protein kinase-like (PK-like)"/>
    <property type="match status" value="1"/>
</dbReference>
<dbReference type="SUPFAM" id="SSF50044">
    <property type="entry name" value="SH3-domain"/>
    <property type="match status" value="2"/>
</dbReference>
<dbReference type="SUPFAM" id="SSF46966">
    <property type="entry name" value="Spectrin repeat"/>
    <property type="match status" value="6"/>
</dbReference>
<dbReference type="PROSITE" id="PS50191">
    <property type="entry name" value="CRAL_TRIO"/>
    <property type="match status" value="1"/>
</dbReference>
<dbReference type="PROSITE" id="PS50010">
    <property type="entry name" value="DH_2"/>
    <property type="match status" value="2"/>
</dbReference>
<dbReference type="PROSITE" id="PS50853">
    <property type="entry name" value="FN3"/>
    <property type="match status" value="1"/>
</dbReference>
<dbReference type="PROSITE" id="PS50835">
    <property type="entry name" value="IG_LIKE"/>
    <property type="match status" value="1"/>
</dbReference>
<dbReference type="PROSITE" id="PS50003">
    <property type="entry name" value="PH_DOMAIN"/>
    <property type="match status" value="2"/>
</dbReference>
<dbReference type="PROSITE" id="PS00107">
    <property type="entry name" value="PROTEIN_KINASE_ATP"/>
    <property type="match status" value="1"/>
</dbReference>
<dbReference type="PROSITE" id="PS50011">
    <property type="entry name" value="PROTEIN_KINASE_DOM"/>
    <property type="match status" value="1"/>
</dbReference>
<dbReference type="PROSITE" id="PS00108">
    <property type="entry name" value="PROTEIN_KINASE_ST"/>
    <property type="match status" value="1"/>
</dbReference>
<dbReference type="PROSITE" id="PS50002">
    <property type="entry name" value="SH3"/>
    <property type="match status" value="2"/>
</dbReference>
<gene>
    <name evidence="24" type="primary">KALRN</name>
    <name type="synonym">DUET</name>
    <name type="synonym">DUO</name>
    <name type="synonym">HAPIP</name>
    <name type="synonym">TRAD</name>
</gene>
<reference key="1">
    <citation type="journal article" date="1997" name="Hum. Mol. Genet.">
        <title>Huntingtin-associated protein 1 (HAP1) binds to a Trio-like polypeptide, with a rac1 guanine nucleotide exchange factor domain.</title>
        <authorList>
            <person name="Colomer V."/>
            <person name="Engelender S."/>
            <person name="Sharp A.H."/>
            <person name="Duan K."/>
            <person name="Cooper J.K."/>
            <person name="Lanahan A."/>
            <person name="Lyford G."/>
            <person name="Worley P."/>
            <person name="Ross C.A."/>
        </authorList>
    </citation>
    <scope>NUCLEOTIDE SEQUENCE [MRNA] (ISOFORM 2)</scope>
    <source>
        <tissue>Frontal cortex</tissue>
    </source>
</reference>
<reference key="2">
    <citation type="journal article" date="1999" name="Gene">
        <title>Duet is a novel serine/threonine kinase with Dbl-homology (DH) and pleckstrin-homology (PH) domains.</title>
        <authorList>
            <person name="Kawai T."/>
            <person name="Sanjo H."/>
            <person name="Akira S."/>
        </authorList>
    </citation>
    <scope>NUCLEOTIDE SEQUENCE [MRNA] (ISOFORM 4)</scope>
    <scope>FUNCTION</scope>
    <scope>MUTAGENESIS OF LYS-2713</scope>
    <scope>AUTOPHOSPHORYLATION</scope>
    <scope>TISSUE SPECIFICITY</scope>
    <scope>SUBCELLULAR LOCATION</scope>
    <source>
        <tissue>Skeletal muscle</tissue>
    </source>
</reference>
<reference key="3">
    <citation type="journal article" date="2004" name="Nat. Genet.">
        <title>Complete sequencing and characterization of 21,243 full-length human cDNAs.</title>
        <authorList>
            <person name="Ota T."/>
            <person name="Suzuki Y."/>
            <person name="Nishikawa T."/>
            <person name="Otsuki T."/>
            <person name="Sugiyama T."/>
            <person name="Irie R."/>
            <person name="Wakamatsu A."/>
            <person name="Hayashi K."/>
            <person name="Sato H."/>
            <person name="Nagai K."/>
            <person name="Kimura K."/>
            <person name="Makita H."/>
            <person name="Sekine M."/>
            <person name="Obayashi M."/>
            <person name="Nishi T."/>
            <person name="Shibahara T."/>
            <person name="Tanaka T."/>
            <person name="Ishii S."/>
            <person name="Yamamoto J."/>
            <person name="Saito K."/>
            <person name="Kawai Y."/>
            <person name="Isono Y."/>
            <person name="Nakamura Y."/>
            <person name="Nagahari K."/>
            <person name="Murakami K."/>
            <person name="Yasuda T."/>
            <person name="Iwayanagi T."/>
            <person name="Wagatsuma M."/>
            <person name="Shiratori A."/>
            <person name="Sudo H."/>
            <person name="Hosoiri T."/>
            <person name="Kaku Y."/>
            <person name="Kodaira H."/>
            <person name="Kondo H."/>
            <person name="Sugawara M."/>
            <person name="Takahashi M."/>
            <person name="Kanda K."/>
            <person name="Yokoi T."/>
            <person name="Furuya T."/>
            <person name="Kikkawa E."/>
            <person name="Omura Y."/>
            <person name="Abe K."/>
            <person name="Kamihara K."/>
            <person name="Katsuta N."/>
            <person name="Sato K."/>
            <person name="Tanikawa M."/>
            <person name="Yamazaki M."/>
            <person name="Ninomiya K."/>
            <person name="Ishibashi T."/>
            <person name="Yamashita H."/>
            <person name="Murakawa K."/>
            <person name="Fujimori K."/>
            <person name="Tanai H."/>
            <person name="Kimata M."/>
            <person name="Watanabe M."/>
            <person name="Hiraoka S."/>
            <person name="Chiba Y."/>
            <person name="Ishida S."/>
            <person name="Ono Y."/>
            <person name="Takiguchi S."/>
            <person name="Watanabe S."/>
            <person name="Yosida M."/>
            <person name="Hotuta T."/>
            <person name="Kusano J."/>
            <person name="Kanehori K."/>
            <person name="Takahashi-Fujii A."/>
            <person name="Hara H."/>
            <person name="Tanase T.-O."/>
            <person name="Nomura Y."/>
            <person name="Togiya S."/>
            <person name="Komai F."/>
            <person name="Hara R."/>
            <person name="Takeuchi K."/>
            <person name="Arita M."/>
            <person name="Imose N."/>
            <person name="Musashino K."/>
            <person name="Yuuki H."/>
            <person name="Oshima A."/>
            <person name="Sasaki N."/>
            <person name="Aotsuka S."/>
            <person name="Yoshikawa Y."/>
            <person name="Matsunawa H."/>
            <person name="Ichihara T."/>
            <person name="Shiohata N."/>
            <person name="Sano S."/>
            <person name="Moriya S."/>
            <person name="Momiyama H."/>
            <person name="Satoh N."/>
            <person name="Takami S."/>
            <person name="Terashima Y."/>
            <person name="Suzuki O."/>
            <person name="Nakagawa S."/>
            <person name="Senoh A."/>
            <person name="Mizoguchi H."/>
            <person name="Goto Y."/>
            <person name="Shimizu F."/>
            <person name="Wakebe H."/>
            <person name="Hishigaki H."/>
            <person name="Watanabe T."/>
            <person name="Sugiyama A."/>
            <person name="Takemoto M."/>
            <person name="Kawakami B."/>
            <person name="Yamazaki M."/>
            <person name="Watanabe K."/>
            <person name="Kumagai A."/>
            <person name="Itakura S."/>
            <person name="Fukuzumi Y."/>
            <person name="Fujimori Y."/>
            <person name="Komiyama M."/>
            <person name="Tashiro H."/>
            <person name="Tanigami A."/>
            <person name="Fujiwara T."/>
            <person name="Ono T."/>
            <person name="Yamada K."/>
            <person name="Fujii Y."/>
            <person name="Ozaki K."/>
            <person name="Hirao M."/>
            <person name="Ohmori Y."/>
            <person name="Kawabata A."/>
            <person name="Hikiji T."/>
            <person name="Kobatake N."/>
            <person name="Inagaki H."/>
            <person name="Ikema Y."/>
            <person name="Okamoto S."/>
            <person name="Okitani R."/>
            <person name="Kawakami T."/>
            <person name="Noguchi S."/>
            <person name="Itoh T."/>
            <person name="Shigeta K."/>
            <person name="Senba T."/>
            <person name="Matsumura K."/>
            <person name="Nakajima Y."/>
            <person name="Mizuno T."/>
            <person name="Morinaga M."/>
            <person name="Sasaki M."/>
            <person name="Togashi T."/>
            <person name="Oyama M."/>
            <person name="Hata H."/>
            <person name="Watanabe M."/>
            <person name="Komatsu T."/>
            <person name="Mizushima-Sugano J."/>
            <person name="Satoh T."/>
            <person name="Shirai Y."/>
            <person name="Takahashi Y."/>
            <person name="Nakagawa K."/>
            <person name="Okumura K."/>
            <person name="Nagase T."/>
            <person name="Nomura N."/>
            <person name="Kikuchi H."/>
            <person name="Masuho Y."/>
            <person name="Yamashita R."/>
            <person name="Nakai K."/>
            <person name="Yada T."/>
            <person name="Nakamura Y."/>
            <person name="Ohara O."/>
            <person name="Isogai T."/>
            <person name="Sugano S."/>
        </authorList>
    </citation>
    <scope>NUCLEOTIDE SEQUENCE [LARGE SCALE MRNA] (ISOFORM 5)</scope>
    <scope>NUCLEOTIDE SEQUENCE [LARGE SCALE MRNA] OF 641-1464 (ISOFORM 1)</scope>
    <source>
        <tissue>Amygdala</tissue>
        <tissue>Testis</tissue>
    </source>
</reference>
<reference key="4">
    <citation type="journal article" date="2006" name="Nature">
        <title>The DNA sequence, annotation and analysis of human chromosome 3.</title>
        <authorList>
            <person name="Muzny D.M."/>
            <person name="Scherer S.E."/>
            <person name="Kaul R."/>
            <person name="Wang J."/>
            <person name="Yu J."/>
            <person name="Sudbrak R."/>
            <person name="Buhay C.J."/>
            <person name="Chen R."/>
            <person name="Cree A."/>
            <person name="Ding Y."/>
            <person name="Dugan-Rocha S."/>
            <person name="Gill R."/>
            <person name="Gunaratne P."/>
            <person name="Harris R.A."/>
            <person name="Hawes A.C."/>
            <person name="Hernandez J."/>
            <person name="Hodgson A.V."/>
            <person name="Hume J."/>
            <person name="Jackson A."/>
            <person name="Khan Z.M."/>
            <person name="Kovar-Smith C."/>
            <person name="Lewis L.R."/>
            <person name="Lozado R.J."/>
            <person name="Metzker M.L."/>
            <person name="Milosavljevic A."/>
            <person name="Miner G.R."/>
            <person name="Morgan M.B."/>
            <person name="Nazareth L.V."/>
            <person name="Scott G."/>
            <person name="Sodergren E."/>
            <person name="Song X.-Z."/>
            <person name="Steffen D."/>
            <person name="Wei S."/>
            <person name="Wheeler D.A."/>
            <person name="Wright M.W."/>
            <person name="Worley K.C."/>
            <person name="Yuan Y."/>
            <person name="Zhang Z."/>
            <person name="Adams C.Q."/>
            <person name="Ansari-Lari M.A."/>
            <person name="Ayele M."/>
            <person name="Brown M.J."/>
            <person name="Chen G."/>
            <person name="Chen Z."/>
            <person name="Clendenning J."/>
            <person name="Clerc-Blankenburg K.P."/>
            <person name="Chen R."/>
            <person name="Chen Z."/>
            <person name="Davis C."/>
            <person name="Delgado O."/>
            <person name="Dinh H.H."/>
            <person name="Dong W."/>
            <person name="Draper H."/>
            <person name="Ernst S."/>
            <person name="Fu G."/>
            <person name="Gonzalez-Garay M.L."/>
            <person name="Garcia D.K."/>
            <person name="Gillett W."/>
            <person name="Gu J."/>
            <person name="Hao B."/>
            <person name="Haugen E."/>
            <person name="Havlak P."/>
            <person name="He X."/>
            <person name="Hennig S."/>
            <person name="Hu S."/>
            <person name="Huang W."/>
            <person name="Jackson L.R."/>
            <person name="Jacob L.S."/>
            <person name="Kelly S.H."/>
            <person name="Kube M."/>
            <person name="Levy R."/>
            <person name="Li Z."/>
            <person name="Liu B."/>
            <person name="Liu J."/>
            <person name="Liu W."/>
            <person name="Lu J."/>
            <person name="Maheshwari M."/>
            <person name="Nguyen B.-V."/>
            <person name="Okwuonu G.O."/>
            <person name="Palmeiri A."/>
            <person name="Pasternak S."/>
            <person name="Perez L.M."/>
            <person name="Phelps K.A."/>
            <person name="Plopper F.J."/>
            <person name="Qiang B."/>
            <person name="Raymond C."/>
            <person name="Rodriguez R."/>
            <person name="Saenphimmachak C."/>
            <person name="Santibanez J."/>
            <person name="Shen H."/>
            <person name="Shen Y."/>
            <person name="Subramanian S."/>
            <person name="Tabor P.E."/>
            <person name="Verduzco D."/>
            <person name="Waldron L."/>
            <person name="Wang J."/>
            <person name="Wang J."/>
            <person name="Wang Q."/>
            <person name="Williams G.A."/>
            <person name="Wong G.K.-S."/>
            <person name="Yao Z."/>
            <person name="Zhang J."/>
            <person name="Zhang X."/>
            <person name="Zhao G."/>
            <person name="Zhou J."/>
            <person name="Zhou Y."/>
            <person name="Nelson D."/>
            <person name="Lehrach H."/>
            <person name="Reinhardt R."/>
            <person name="Naylor S.L."/>
            <person name="Yang H."/>
            <person name="Olson M."/>
            <person name="Weinstock G."/>
            <person name="Gibbs R.A."/>
        </authorList>
    </citation>
    <scope>NUCLEOTIDE SEQUENCE [LARGE SCALE GENOMIC DNA]</scope>
</reference>
<reference key="5">
    <citation type="submission" date="2005-09" db="EMBL/GenBank/DDBJ databases">
        <authorList>
            <person name="Mural R.J."/>
            <person name="Istrail S."/>
            <person name="Sutton G.G."/>
            <person name="Florea L."/>
            <person name="Halpern A.L."/>
            <person name="Mobarry C.M."/>
            <person name="Lippert R."/>
            <person name="Walenz B."/>
            <person name="Shatkay H."/>
            <person name="Dew I."/>
            <person name="Miller J.R."/>
            <person name="Flanigan M.J."/>
            <person name="Edwards N.J."/>
            <person name="Bolanos R."/>
            <person name="Fasulo D."/>
            <person name="Halldorsson B.V."/>
            <person name="Hannenhalli S."/>
            <person name="Turner R."/>
            <person name="Yooseph S."/>
            <person name="Lu F."/>
            <person name="Nusskern D.R."/>
            <person name="Shue B.C."/>
            <person name="Zheng X.H."/>
            <person name="Zhong F."/>
            <person name="Delcher A.L."/>
            <person name="Huson D.H."/>
            <person name="Kravitz S.A."/>
            <person name="Mouchard L."/>
            <person name="Reinert K."/>
            <person name="Remington K.A."/>
            <person name="Clark A.G."/>
            <person name="Waterman M.S."/>
            <person name="Eichler E.E."/>
            <person name="Adams M.D."/>
            <person name="Hunkapiller M.W."/>
            <person name="Myers E.W."/>
            <person name="Venter J.C."/>
        </authorList>
    </citation>
    <scope>NUCLEOTIDE SEQUENCE [LARGE SCALE GENOMIC DNA]</scope>
</reference>
<reference key="6">
    <citation type="journal article" date="2004" name="Genome Res.">
        <title>The status, quality, and expansion of the NIH full-length cDNA project: the Mammalian Gene Collection (MGC).</title>
        <authorList>
            <consortium name="The MGC Project Team"/>
        </authorList>
    </citation>
    <scope>NUCLEOTIDE SEQUENCE [LARGE SCALE MRNA] OF 1-1917 (ISOFORM 6)</scope>
    <scope>NUCLEOTIDE SEQUENCE [LARGE SCALE MRNA] OF 2105-2986 (ISOFORM 5)</scope>
    <source>
        <tissue>Kidney</tissue>
    </source>
</reference>
<reference key="7">
    <citation type="journal article" date="2007" name="BMC Genomics">
        <title>The full-ORF clone resource of the German cDNA consortium.</title>
        <authorList>
            <person name="Bechtel S."/>
            <person name="Rosenfelder H."/>
            <person name="Duda A."/>
            <person name="Schmidt C.P."/>
            <person name="Ernst U."/>
            <person name="Wellenreuther R."/>
            <person name="Mehrle A."/>
            <person name="Schuster C."/>
            <person name="Bahr A."/>
            <person name="Bloecker H."/>
            <person name="Heubner D."/>
            <person name="Hoerlein A."/>
            <person name="Michel G."/>
            <person name="Wedler H."/>
            <person name="Koehrer K."/>
            <person name="Ottenwaelder B."/>
            <person name="Poustka A."/>
            <person name="Wiemann S."/>
            <person name="Schupp I."/>
        </authorList>
    </citation>
    <scope>NUCLEOTIDE SEQUENCE [LARGE SCALE MRNA] OF 2017-2986 (ISOFORM 5)</scope>
    <source>
        <tissue>Testis</tissue>
    </source>
</reference>
<reference key="8">
    <citation type="journal article" date="2008" name="J. Proteome Res.">
        <title>Phosphoproteome of resting human platelets.</title>
        <authorList>
            <person name="Zahedi R.P."/>
            <person name="Lewandrowski U."/>
            <person name="Wiesner J."/>
            <person name="Wortelkamp S."/>
            <person name="Moebius J."/>
            <person name="Schuetz C."/>
            <person name="Walter U."/>
            <person name="Gambaryan S."/>
            <person name="Sickmann A."/>
        </authorList>
    </citation>
    <scope>PHOSPHORYLATION [LARGE SCALE ANALYSIS] AT SER-1750; SER-1753; SER-1799; SER-1817 AND SER-2262</scope>
    <scope>IDENTIFICATION BY MASS SPECTROMETRY [LARGE SCALE ANALYSIS]</scope>
    <source>
        <tissue>Platelet</tissue>
    </source>
</reference>
<reference key="9">
    <citation type="journal article" date="2008" name="Proc. Natl. Acad. Sci. U.S.A.">
        <title>A quantitative atlas of mitotic phosphorylation.</title>
        <authorList>
            <person name="Dephoure N."/>
            <person name="Zhou C."/>
            <person name="Villen J."/>
            <person name="Beausoleil S.A."/>
            <person name="Bakalarski C.E."/>
            <person name="Elledge S.J."/>
            <person name="Gygi S.P."/>
        </authorList>
    </citation>
    <scope>PHOSPHORYLATION [LARGE SCALE ANALYSIS] AT SER-1799</scope>
    <scope>IDENTIFICATION BY MASS SPECTROMETRY [LARGE SCALE ANALYSIS]</scope>
    <source>
        <tissue>Cervix carcinoma</tissue>
    </source>
</reference>
<reference key="10">
    <citation type="journal article" date="2009" name="BMC Immunol.">
        <title>Identification of SH3 domain interaction partners of human FasL (CD178) by phage display screening.</title>
        <authorList>
            <person name="Voss M."/>
            <person name="Lettau M."/>
            <person name="Janssen O."/>
        </authorList>
    </citation>
    <scope>INTERACTION WITH FASLG</scope>
</reference>
<reference key="11">
    <citation type="journal article" date="2012" name="Biochemistry">
        <title>Structural organization of the nine spectrin repeats of Kalirin.</title>
        <authorList>
            <person name="Vishwanatha K.S."/>
            <person name="Wang Y.P."/>
            <person name="Keutmann H.T."/>
            <person name="Mains R.E."/>
            <person name="Eipper B.A."/>
        </authorList>
    </citation>
    <scope>SPECTRIN REPEATS</scope>
</reference>
<reference key="12">
    <citation type="journal article" date="2006" name="Science">
        <title>The consensus coding sequences of human breast and colorectal cancers.</title>
        <authorList>
            <person name="Sjoeblom T."/>
            <person name="Jones S."/>
            <person name="Wood L.D."/>
            <person name="Parsons D.W."/>
            <person name="Lin J."/>
            <person name="Barber T.D."/>
            <person name="Mandelker D."/>
            <person name="Leary R.J."/>
            <person name="Ptak J."/>
            <person name="Silliman N."/>
            <person name="Szabo S."/>
            <person name="Buckhaults P."/>
            <person name="Farrell C."/>
            <person name="Meeh P."/>
            <person name="Markowitz S.D."/>
            <person name="Willis J."/>
            <person name="Dawson D."/>
            <person name="Willson J.K.V."/>
            <person name="Gazdar A.F."/>
            <person name="Hartigan J."/>
            <person name="Wu L."/>
            <person name="Liu C."/>
            <person name="Parmigiani G."/>
            <person name="Park B.H."/>
            <person name="Bachman K.E."/>
            <person name="Papadopoulos N."/>
            <person name="Vogelstein B."/>
            <person name="Kinzler K.W."/>
            <person name="Velculescu V.E."/>
        </authorList>
    </citation>
    <scope>VARIANTS [LARGE SCALE ANALYSIS] TRP-213 AND CYS-1897</scope>
</reference>
<reference key="13">
    <citation type="journal article" date="2007" name="Nature">
        <title>Patterns of somatic mutation in human cancer genomes.</title>
        <authorList>
            <person name="Greenman C."/>
            <person name="Stephens P."/>
            <person name="Smith R."/>
            <person name="Dalgliesh G.L."/>
            <person name="Hunter C."/>
            <person name="Bignell G."/>
            <person name="Davies H."/>
            <person name="Teague J."/>
            <person name="Butler A."/>
            <person name="Stevens C."/>
            <person name="Edkins S."/>
            <person name="O'Meara S."/>
            <person name="Vastrik I."/>
            <person name="Schmidt E.E."/>
            <person name="Avis T."/>
            <person name="Barthorpe S."/>
            <person name="Bhamra G."/>
            <person name="Buck G."/>
            <person name="Choudhury B."/>
            <person name="Clements J."/>
            <person name="Cole J."/>
            <person name="Dicks E."/>
            <person name="Forbes S."/>
            <person name="Gray K."/>
            <person name="Halliday K."/>
            <person name="Harrison R."/>
            <person name="Hills K."/>
            <person name="Hinton J."/>
            <person name="Jenkinson A."/>
            <person name="Jones D."/>
            <person name="Menzies A."/>
            <person name="Mironenko T."/>
            <person name="Perry J."/>
            <person name="Raine K."/>
            <person name="Richardson D."/>
            <person name="Shepherd R."/>
            <person name="Small A."/>
            <person name="Tofts C."/>
            <person name="Varian J."/>
            <person name="Webb T."/>
            <person name="West S."/>
            <person name="Widaa S."/>
            <person name="Yates A."/>
            <person name="Cahill D.P."/>
            <person name="Louis D.N."/>
            <person name="Goldstraw P."/>
            <person name="Nicholson A.G."/>
            <person name="Brasseur F."/>
            <person name="Looijenga L."/>
            <person name="Weber B.L."/>
            <person name="Chiew Y.-E."/>
            <person name="DeFazio A."/>
            <person name="Greaves M.F."/>
            <person name="Green A.R."/>
            <person name="Campbell P."/>
            <person name="Birney E."/>
            <person name="Easton D.F."/>
            <person name="Chenevix-Trench G."/>
            <person name="Tan M.-H."/>
            <person name="Khoo S.K."/>
            <person name="Teh B.T."/>
            <person name="Yuen S.T."/>
            <person name="Leung S.Y."/>
            <person name="Wooster R."/>
            <person name="Futreal P.A."/>
            <person name="Stratton M.R."/>
        </authorList>
    </citation>
    <scope>VARIANT [LARGE SCALE ANALYSIS] LEU-196</scope>
</reference>
<sequence>MTDRFWDQWYLWYLRLLRLLDRGSFRNDGLKASDVLPILKEKVAFVSGGRDKRGGPILTFPARSNHDRIRQEDLRKLVTYLASVPSEDVCKRGFTVIIDMRGSKWDLIKPLLKTLQEAFPAEIHVALIIKPDNFWQKQKTNFGSSKFIFETSMVSVEGLTKLVDPSQLTEEFDGSLDYNHEEWIELRLSLEEFFNSAVHLLSRLEDLQEMLARKEFPVDVEGSRRLIDEHTQLKKKVLKAPVEELDREGQRLLQCIRCSDGFSGRNCIPGSADFQSLVPKITSLLDKLHSTRQHLHQMWHVRKLKLDQCFQLRLFEQDAEKMFDWISHNKELFLQSHTEIGVSYQYALDLQTQHNHFAMNSMNAYVNINRIMSVASRLSEAGHYASQQIKQISTQLDQEWKSFAAALDERSTILAMSAVFHQKAEQFLSGVDAWCKMCSEGGLPSEMQDLELAIHHHQTLYEQVTQAYTEVSQDGKALLDVLQRPLSPGNSESLTATANYSKAVHQVLDVVHEVLHHQRRLESIWQHRKVRLHQRLQLCVFQQDVQQVLDWIENHGEAFLSKHTGVGKSLHRARALQKRHDDFEEVAQNTYTNADKLLEAAEQLAQTGECDPEEIYKAARHLEVRIQDFVRRVEQRKLLLDMSVSFHTHTKELWTWMEDLQKEMLEDVCADSVDAVQELIKQFQQQQTATLDATLNVIKEGEDLIQQLRSAPPSLGEPSEARDSAVSNNKTPHSSSISHIESVLQQLDDAQVQMEELFHERKIKLDIFLQLRIFEQYTIEVTAELDAWNEDLLRQMNDFNTEDLTLAEQRLQRHTERKLAMNNMTFEVIQQGQDLHQYITEVQASGIELICEKDIDLAAQVQELLEFLHEKQHELELNAEQTHKRLEQCLQLRHLQAEVKQVLGWIRNGESMLNASLVNASSLSEAEQLQREHEQFQLAIESLFHATSLQKTHQSALQVQQKAEVLLQAGHYDADAIRECAEKVALHWQQLMLKMEDRLKLVNASVAFYKTSEQVCSVLESLEQEYRRDEDWCGGRDKLGPAAEIDHVIPLISKHLEQKEAFLKACTLARRNAEVFLKYIHRNNVSMPSVASHTRGPEQQVKAILSELLQRENRVLHFWTLKKRRLDQCQQYVVFERSAKQALDWIQETGEFYLSTHTSTGETTEETQELLKEYGEFRVPAKQTKEKVKLLIQLADSFVEKGHIHATEIRKWVTTVDKHYRDFSLRMGKYRYSLEKALGVNTEDNKDLELDIIPASLSDREVKLRDANHEVNEEKRKSARKKEFIMAELLQTEKAYVRDLHECLETYLWEMTSGVEEIPPGILNKEHIIFGNIQEIYDFHNNIFLKELEKYEQLPEDVGHCFVTWADKFQMYVTYCKNKPDSNQLILEHAGTFFDEIQQRHGLANSISSYLIKPVQRITKYQLLLKELLTCCEEGKGELKDGLEVMLSVPKKANDAMHVSMLEGFDENLDVQGELILQDAFQVWDPKSLIRKGRERHLFLFEISLVFSKEIKDSSGHTKYVYKNKLLTSELGVTEHVEGDPCKFALWSGRTPSSDNKTVLKASNIETKQEWIKNIREVIQERIIHLKGALKEPLQLPKTPAKQRNNSKRDGVEDIDSQGDGSSQPDTISIASRTSQNTVDSDKLSGGCELTVVLQDFSAGHSSELTIQVGQTVELLERPSERPGWCLVRTTERSPPLEGLVPSSALCISHSRSSVEMDCFFPLVKDAYSHSSSENGGKSESVANLQAQPSLNSIHSSPGPKRSTNTLKKWLTSPVRRLNSGKADGNIKKQKKVRDGRKSFDLGSPKPGDETTPQGDSADEKSKKGWGEDEPDEESHTPLPPPMKIFDNDPTQDEMSSSLLAARQASTEVPTAADLVNAIEKLVKNKLSLEGSSYRGSLKDPAGCLNEGMAPPTPPKNPEEEQKAKALRGRMFVLNELVQTEKDYVKDLGIVVEGFMKRIEEKGVPEDMRGKDKIVFGNIHQIYDWHKDFFLAELEKCIQEQDRLAQLFIKHERKLHIYVWYCQNKPRSEYIVAEYDAYFEEVKQEINQRLTLSDFLIKPIQRITKYQLLLKDFLRYSEKAGLECSDIEKAVELMCLVPKRCNDMMNLGRLQGFEGTLTAQGKLLQQDTFYVIELDAGMQSRTKERRVFLFEQIVIFSELLRKGSLTPGYMFKRSIKMNYLVLEENVDNDPCKFALMNRETSERVVLQAANADIQQAWVQDINQVLETQRDFLNALQSPIEYQRKERSTAVMRSQPARLPQASPRPYSSVPAGSEKPPKGSSYNPPLPPLKISTSNGSPGFEYHQPGDKFEASKQNDLGGCNGTSSMAVIKDYYALKENEICVSQGEVVQVLAVNQQNMCLVYQPASDHSPAAEGWVPGSILAPLTKATAAESSDGSIKKSCSWHTLRMRKRAEVENTGKNEATGPRKPKDILGNKVSVKETNSSEESECDDLDPNTSMEILNPNFIQEVAPEFLVPLVDVTCLLGDTVILQCKVCGRPKPTITWKGPDQNILDTDNSSATYTVSSCDSGEITLKICNLMPQDSGIYTCIATNDHGTTSTSATVKVQGVPAAPNRPIAQERSCTSVILRWLPPSSTGNCTISGYTVEYREEGSQIWQQSVASTLDTYLVIEDLSPGCPYQFRVSASNPWGISLPSEPSEFVRLPEYDAAADGATISWKENFDSAYTELNEIGRGRFSIVKKCIHKATRKDVAVKFVSKKMKKKEQAAHEAALLQHLQHPQYITLHDTYESPTSYILILELMDDGRLLDYLMNHDELMEEKVAFYIRDIMEALQYLHNCRVAHLDIKPENLLIDLRIPVPRVKLIDLEDAVQISGHFHIHHLLGNPEFAAPEVIQGIPVSLGTDIWSIGVLTYVMLSGVSPFLDESKEETCINVCRVDFSFPHEYFCGVSNAARDFINVILQEDFRRRPTAATCLQHPWLQPHNGSYSKIPLDTSRLACFIERRKHQNDVRPIPNVKSYIVNRVNQGT</sequence>
<organism>
    <name type="scientific">Homo sapiens</name>
    <name type="common">Human</name>
    <dbReference type="NCBI Taxonomy" id="9606"/>
    <lineage>
        <taxon>Eukaryota</taxon>
        <taxon>Metazoa</taxon>
        <taxon>Chordata</taxon>
        <taxon>Craniata</taxon>
        <taxon>Vertebrata</taxon>
        <taxon>Euteleostomi</taxon>
        <taxon>Mammalia</taxon>
        <taxon>Eutheria</taxon>
        <taxon>Euarchontoglires</taxon>
        <taxon>Primates</taxon>
        <taxon>Haplorrhini</taxon>
        <taxon>Catarrhini</taxon>
        <taxon>Hominidae</taxon>
        <taxon>Homo</taxon>
    </lineage>
</organism>
<feature type="chain" id="PRO_0000080955" description="Kalirin">
    <location>
        <begin position="1"/>
        <end position="2986"/>
    </location>
</feature>
<feature type="domain" description="CRAL-TRIO" evidence="5">
    <location>
        <begin position="35"/>
        <end position="180"/>
    </location>
</feature>
<feature type="repeat" description="Spectrin 1" evidence="4">
    <location>
        <begin position="167"/>
        <end position="308"/>
    </location>
</feature>
<feature type="repeat" description="Spectrin 2" evidence="4">
    <location>
        <begin position="310"/>
        <end position="417"/>
    </location>
</feature>
<feature type="repeat" description="Spectrin 3" evidence="4">
    <location>
        <begin position="418"/>
        <end position="535"/>
    </location>
</feature>
<feature type="repeat" description="Spectrin 4" evidence="4">
    <location>
        <begin position="536"/>
        <end position="639"/>
    </location>
</feature>
<feature type="repeat" description="Spectrin 5" evidence="4">
    <location>
        <begin position="640"/>
        <end position="770"/>
    </location>
</feature>
<feature type="repeat" description="Spectrin 6" evidence="4">
    <location>
        <begin position="771"/>
        <end position="888"/>
    </location>
</feature>
<feature type="repeat" description="Spectrin 7" evidence="4">
    <location>
        <begin position="889"/>
        <end position="1004"/>
    </location>
</feature>
<feature type="repeat" description="Spectrin 8" evidence="4">
    <location>
        <begin position="1005"/>
        <end position="1128"/>
    </location>
</feature>
<feature type="repeat" description="Spectrin 9" evidence="4">
    <location>
        <begin position="1129"/>
        <end position="1234"/>
    </location>
</feature>
<feature type="domain" description="DH 1" evidence="6">
    <location>
        <begin position="1281"/>
        <end position="1456"/>
    </location>
</feature>
<feature type="domain" description="PH 1" evidence="8">
    <location>
        <begin position="1468"/>
        <end position="1580"/>
    </location>
</feature>
<feature type="domain" description="SH3 1" evidence="10">
    <location>
        <begin position="1646"/>
        <end position="1711"/>
    </location>
</feature>
<feature type="domain" description="DH 2" evidence="6">
    <location>
        <begin position="1929"/>
        <end position="2104"/>
    </location>
</feature>
<feature type="domain" description="PH 2" evidence="8">
    <location>
        <begin position="2116"/>
        <end position="2226"/>
    </location>
</feature>
<feature type="domain" description="SH3 2" evidence="10">
    <location>
        <begin position="2321"/>
        <end position="2386"/>
    </location>
</feature>
<feature type="domain" description="Ig-like C2-type">
    <location>
        <begin position="2471"/>
        <end position="2564"/>
    </location>
</feature>
<feature type="domain" description="Fibronectin type-III" evidence="11">
    <location>
        <begin position="2571"/>
        <end position="2665"/>
    </location>
</feature>
<feature type="domain" description="Protein kinase" evidence="9">
    <location>
        <begin position="2684"/>
        <end position="2938"/>
    </location>
</feature>
<feature type="region of interest" description="Disordered" evidence="13">
    <location>
        <begin position="710"/>
        <end position="735"/>
    </location>
</feature>
<feature type="region of interest" description="Disordered" evidence="13">
    <location>
        <begin position="1594"/>
        <end position="1642"/>
    </location>
</feature>
<feature type="region of interest" description="Disordered" evidence="13">
    <location>
        <begin position="1750"/>
        <end position="1857"/>
    </location>
</feature>
<feature type="region of interest" description="Disordered" evidence="13">
    <location>
        <begin position="2244"/>
        <end position="2310"/>
    </location>
</feature>
<feature type="region of interest" description="Disordered" evidence="13">
    <location>
        <begin position="2412"/>
        <end position="2454"/>
    </location>
</feature>
<feature type="compositionally biased region" description="Polar residues" evidence="13">
    <location>
        <begin position="725"/>
        <end position="735"/>
    </location>
</feature>
<feature type="compositionally biased region" description="Polar residues" evidence="13">
    <location>
        <begin position="1619"/>
        <end position="1639"/>
    </location>
</feature>
<feature type="compositionally biased region" description="Polar residues" evidence="13">
    <location>
        <begin position="1750"/>
        <end position="1767"/>
    </location>
</feature>
<feature type="compositionally biased region" description="Basic and acidic residues" evidence="13">
    <location>
        <begin position="1818"/>
        <end position="1827"/>
    </location>
</feature>
<feature type="compositionally biased region" description="Acidic residues" evidence="13">
    <location>
        <begin position="2443"/>
        <end position="2453"/>
    </location>
</feature>
<feature type="active site" description="Proton acceptor" evidence="9 12">
    <location>
        <position position="2803"/>
    </location>
</feature>
<feature type="binding site" evidence="9">
    <location>
        <begin position="2690"/>
        <end position="2698"/>
    </location>
    <ligand>
        <name>ATP</name>
        <dbReference type="ChEBI" id="CHEBI:30616"/>
    </ligand>
</feature>
<feature type="binding site">
    <location>
        <position position="2713"/>
    </location>
    <ligand>
        <name>ATP</name>
        <dbReference type="ChEBI" id="CHEBI:30616"/>
    </ligand>
</feature>
<feature type="modified residue" description="Phosphoserine" evidence="25">
    <location>
        <position position="1750"/>
    </location>
</feature>
<feature type="modified residue" description="Phosphoserine" evidence="25">
    <location>
        <position position="1753"/>
    </location>
</feature>
<feature type="modified residue" description="Phosphoserine" evidence="25 26">
    <location>
        <position position="1799"/>
    </location>
</feature>
<feature type="modified residue" description="Phosphothreonine" evidence="3">
    <location>
        <position position="1812"/>
    </location>
</feature>
<feature type="modified residue" description="Phosphoserine" evidence="25">
    <location>
        <position position="1817"/>
    </location>
</feature>
<feature type="modified residue" description="Phosphothreonine" evidence="2">
    <location>
        <position position="1913"/>
    </location>
</feature>
<feature type="modified residue" description="Phosphoserine" evidence="25">
    <location>
        <position position="2262"/>
    </location>
</feature>
<feature type="disulfide bond" evidence="7">
    <location>
        <begin position="2492"/>
        <end position="2548"/>
    </location>
</feature>
<feature type="splice variant" id="VSP_028903" description="In isoform 4 and isoform 6." evidence="18">
    <location>
        <begin position="1"/>
        <end position="1697"/>
    </location>
</feature>
<feature type="splice variant" id="VSP_028904" description="In isoform 5." evidence="19 20 21">
    <location>
        <begin position="1"/>
        <end position="1627"/>
    </location>
</feature>
<feature type="splice variant" id="VSP_062495" description="In isoform 7.">
    <original>MTDRFWDQWYLWYLRLLRLLDR</original>
    <variation>MNPPEGAAEEGGAADSDVDAFFRT</variation>
    <location>
        <begin position="1"/>
        <end position="22"/>
    </location>
</feature>
<feature type="splice variant" id="VSP_028909" description="In isoform 5." evidence="19 20 21">
    <original>ISIASRTSQNTVDSDK</original>
    <variation>MLKWISWRQSKANKAQ</variation>
    <location>
        <begin position="1628"/>
        <end position="1643"/>
    </location>
</feature>
<feature type="splice variant" id="VSP_028910" description="In isoform 2." evidence="22">
    <original>LSGGCELTVVLQDFSAGHSS</original>
    <variation>DGNLVPRWHLGPGDPFSTYV</variation>
    <location>
        <begin position="1644"/>
        <end position="1663"/>
    </location>
</feature>
<feature type="splice variant" id="VSP_028911" description="In isoform 2." evidence="22">
    <location>
        <begin position="1664"/>
        <end position="2986"/>
    </location>
</feature>
<feature type="splice variant" id="VSP_028912" description="In isoform 4 and isoform 6." evidence="18">
    <original>EGLVPSSALCISHSRSSVEMDCFFPLVK</original>
    <variation>MKGGDRAYTRGPSLGWLFAKCCCCFPCR</variation>
    <location>
        <begin position="1698"/>
        <end position="1725"/>
    </location>
</feature>
<feature type="splice variant" id="VSP_062496" description="In isoform 7.">
    <location>
        <position position="1821"/>
    </location>
</feature>
<feature type="splice variant" id="VSP_028913" description="In isoform 5 and isoform 6." evidence="19 20 21">
    <location>
        <begin position="1857"/>
        <end position="1888"/>
    </location>
</feature>
<feature type="splice variant" id="VSP_028914" description="In isoform 5 and isoform 7." evidence="19 20 21">
    <location>
        <position position="2314"/>
    </location>
</feature>
<feature type="splice variant" id="VSP_028915" description="In isoform 5." evidence="19 20 21">
    <location>
        <begin position="2399"/>
        <end position="2986"/>
    </location>
</feature>
<feature type="sequence variant" id="VAR_041898" evidence="16">
    <original>S</original>
    <variation>L</variation>
    <location>
        <position position="196"/>
    </location>
</feature>
<feature type="sequence variant" id="VAR_035976" description="In a colorectal cancer sample; somatic mutation; dbSNP:rs1187034389." evidence="15">
    <original>R</original>
    <variation>W</variation>
    <location>
        <position position="213"/>
    </location>
</feature>
<feature type="sequence variant" id="VAR_020192" description="In dbSNP:rs2289838.">
    <original>E</original>
    <variation>D</variation>
    <location>
        <position position="1326"/>
    </location>
</feature>
<feature type="sequence variant" id="VAR_035625" description="In a breast cancer sample; somatic mutation." evidence="15">
    <original>S</original>
    <variation>C</variation>
    <location>
        <position position="1897"/>
    </location>
</feature>
<feature type="sequence variant" id="VAR_057190" description="In dbSNP:rs35298864.">
    <original>R</original>
    <variation>M</variation>
    <location>
        <position position="1930"/>
    </location>
</feature>
<feature type="mutagenesis site" description="Loss of autophosphorylation." evidence="14">
    <original>K</original>
    <variation>A</variation>
    <location>
        <position position="2713"/>
    </location>
</feature>
<feature type="sequence conflict" description="In Ref. 2; BAA76314." evidence="23" ref="2">
    <original>E</original>
    <variation>G</variation>
    <location>
        <position position="2459"/>
    </location>
</feature>
<feature type="helix" evidence="27">
    <location>
        <begin position="1281"/>
        <end position="1305"/>
    </location>
</feature>
<feature type="helix" evidence="27">
    <location>
        <begin position="1307"/>
        <end position="1313"/>
    </location>
</feature>
<feature type="strand" evidence="27">
    <location>
        <begin position="1314"/>
        <end position="1316"/>
    </location>
</feature>
<feature type="turn" evidence="27">
    <location>
        <begin position="1320"/>
        <end position="1324"/>
    </location>
</feature>
<feature type="helix" evidence="27">
    <location>
        <begin position="1326"/>
        <end position="1330"/>
    </location>
</feature>
<feature type="helix" evidence="27">
    <location>
        <begin position="1333"/>
        <end position="1342"/>
    </location>
</feature>
<feature type="helix" evidence="27">
    <location>
        <begin position="1344"/>
        <end position="1350"/>
    </location>
</feature>
<feature type="turn" evidence="27">
    <location>
        <begin position="1351"/>
        <end position="1353"/>
    </location>
</feature>
<feature type="helix" evidence="27">
    <location>
        <begin position="1355"/>
        <end position="1358"/>
    </location>
</feature>
<feature type="helix" evidence="27">
    <location>
        <begin position="1359"/>
        <end position="1364"/>
    </location>
</feature>
<feature type="turn" evidence="27">
    <location>
        <begin position="1365"/>
        <end position="1367"/>
    </location>
</feature>
<feature type="helix" evidence="27">
    <location>
        <begin position="1368"/>
        <end position="1370"/>
    </location>
</feature>
<feature type="helix" evidence="27">
    <location>
        <begin position="1371"/>
        <end position="1389"/>
    </location>
</feature>
<feature type="helix" evidence="27">
    <location>
        <begin position="1393"/>
        <end position="1401"/>
    </location>
</feature>
<feature type="helix" evidence="27">
    <location>
        <begin position="1407"/>
        <end position="1429"/>
    </location>
</feature>
<feature type="helix" evidence="27">
    <location>
        <begin position="1437"/>
        <end position="1455"/>
    </location>
</feature>
<feature type="helix" evidence="28">
    <location>
        <begin position="1920"/>
        <end position="1953"/>
    </location>
</feature>
<feature type="helix" evidence="28">
    <location>
        <begin position="1955"/>
        <end position="1962"/>
    </location>
</feature>
<feature type="helix" evidence="28">
    <location>
        <begin position="1966"/>
        <end position="1968"/>
    </location>
</feature>
<feature type="helix" evidence="28">
    <location>
        <begin position="1971"/>
        <end position="1976"/>
    </location>
</feature>
<feature type="helix" evidence="28">
    <location>
        <begin position="1979"/>
        <end position="1988"/>
    </location>
</feature>
<feature type="helix" evidence="28">
    <location>
        <begin position="1990"/>
        <end position="1999"/>
    </location>
</feature>
<feature type="helix" evidence="28">
    <location>
        <begin position="2003"/>
        <end position="2010"/>
    </location>
</feature>
<feature type="helix" evidence="28">
    <location>
        <begin position="2012"/>
        <end position="2015"/>
    </location>
</feature>
<feature type="helix" evidence="28">
    <location>
        <begin position="2016"/>
        <end position="2023"/>
    </location>
</feature>
<feature type="helix" evidence="28">
    <location>
        <begin position="2025"/>
        <end position="2034"/>
    </location>
</feature>
<feature type="helix" evidence="28">
    <location>
        <begin position="2036"/>
        <end position="2045"/>
    </location>
</feature>
<feature type="helix" evidence="28">
    <location>
        <begin position="2052"/>
        <end position="2056"/>
    </location>
</feature>
<feature type="helix" evidence="28">
    <location>
        <begin position="2058"/>
        <end position="2079"/>
    </location>
</feature>
<feature type="helix" evidence="28">
    <location>
        <begin position="2085"/>
        <end position="2108"/>
    </location>
</feature>
<accession>O60229</accession>
<accession>A0A804HLI0</accession>
<accession>A8MSI4</accession>
<accession>C9JQ37</accession>
<accession>J3QSW6</accession>
<accession>Q6ZN45</accession>
<accession>Q8TBQ5</accession>
<accession>Q9NSZ4</accession>
<accession>Q9Y2A5</accession>
<name>KALRN_HUMAN</name>